<name>GENK_CORGL</name>
<comment type="function">
    <text evidence="2">Transport of gentisate (2,5-dihydroxybenzoate) into the cell. Does not transport 3-hydroxybenzoate or benzoate.</text>
</comment>
<comment type="biophysicochemical properties">
    <kinetics>
        <KM evidence="2">10.71 uM for gentisate</KM>
        <Vmax evidence="2">3.06 nmol/min/mg enzyme</Vmax>
    </kinetics>
</comment>
<comment type="subcellular location">
    <subcellularLocation>
        <location evidence="3">Cell membrane</location>
        <topology evidence="3">Multi-pass membrane protein</topology>
    </subcellularLocation>
</comment>
<comment type="disruption phenotype">
    <text evidence="2">Deletion mutant retains 85% of its transport activity at pH 6.5, but it loses 79% and 88% activity at pH 7.5 and 8.0, respectively.</text>
</comment>
<comment type="similarity">
    <text evidence="3">Belongs to the major facilitator superfamily. Aromatic acid:H(+) symporter (AAHS) (TC 2.A.1.15) family.</text>
</comment>
<comment type="sequence caution" evidence="3">
    <conflict type="erroneous initiation">
        <sequence resource="EMBL-CDS" id="BAC00419"/>
    </conflict>
    <text>Extended N-terminus.</text>
</comment>
<comment type="sequence caution" evidence="3">
    <conflict type="erroneous initiation">
        <sequence resource="EMBL-CDS" id="CAF18965"/>
    </conflict>
    <text>Truncated N-terminus.</text>
</comment>
<sequence>MTSHAPESGGLVTESTLGASNSSQTIENKGLTILGISGRRLAAVLIGWFFVIFDGYDLIVYGTVQSALAKEWNLSSATLGTIGSTAFFGMAIGAVFIGRLSDRVGRKAAVIGSVLILSVFTMLCAFAPNPWVFGAFRFIAGLGLGGLVPSVNAMTSDLVPRKTMSAWATVMMSGVPIGGSIAAVLALVVVPSSEEWGWRFMFLIALIPLVVGLPIAMKVIPSDKAIKADHDIREGHDEPAGFKDLLVDRYRWISIWFALATFVTLLAWYGLGTWLPRLMETAGYEFGHALMFTLALNLGAVIGSVVTAWAGDRFGPIRSGVIAAGIAGIALLLLLTYPPVTAVYVILILAGVGTHGTQILIIAAVANFYPSNLRGTALGWALGVGRIGAVVAPQLAGLLLAWNLGVNSNFIMFGTAALLSALALSVLLRLQKTYSVTHKVEIQG</sequence>
<keyword id="KW-1003">Cell membrane</keyword>
<keyword id="KW-0472">Membrane</keyword>
<keyword id="KW-1185">Reference proteome</keyword>
<keyword id="KW-0769">Symport</keyword>
<keyword id="KW-0812">Transmembrane</keyword>
<keyword id="KW-1133">Transmembrane helix</keyword>
<keyword id="KW-0813">Transport</keyword>
<evidence type="ECO:0000255" key="1"/>
<evidence type="ECO:0000269" key="2">
    <source>
    </source>
</evidence>
<evidence type="ECO:0000305" key="3"/>
<proteinExistence type="evidence at protein level"/>
<protein>
    <recommendedName>
        <fullName>Gentisate transporter</fullName>
    </recommendedName>
</protein>
<accession>Q8NLB7</accession>
<accession>Q6M1I5</accession>
<reference key="1">
    <citation type="journal article" date="2003" name="Appl. Microbiol. Biotechnol.">
        <title>The Corynebacterium glutamicum genome: features and impacts on biotechnological processes.</title>
        <authorList>
            <person name="Ikeda M."/>
            <person name="Nakagawa S."/>
        </authorList>
    </citation>
    <scope>NUCLEOTIDE SEQUENCE [LARGE SCALE GENOMIC DNA]</scope>
    <source>
        <strain>ATCC 13032 / DSM 20300 / JCM 1318 / BCRC 11384 / CCUG 27702 / LMG 3730 / NBRC 12168 / NCIMB 10025 / NRRL B-2784 / 534</strain>
    </source>
</reference>
<reference key="2">
    <citation type="journal article" date="2003" name="J. Biotechnol.">
        <title>The complete Corynebacterium glutamicum ATCC 13032 genome sequence and its impact on the production of L-aspartate-derived amino acids and vitamins.</title>
        <authorList>
            <person name="Kalinowski J."/>
            <person name="Bathe B."/>
            <person name="Bartels D."/>
            <person name="Bischoff N."/>
            <person name="Bott M."/>
            <person name="Burkovski A."/>
            <person name="Dusch N."/>
            <person name="Eggeling L."/>
            <person name="Eikmanns B.J."/>
            <person name="Gaigalat L."/>
            <person name="Goesmann A."/>
            <person name="Hartmann M."/>
            <person name="Huthmacher K."/>
            <person name="Kraemer R."/>
            <person name="Linke B."/>
            <person name="McHardy A.C."/>
            <person name="Meyer F."/>
            <person name="Moeckel B."/>
            <person name="Pfefferle W."/>
            <person name="Puehler A."/>
            <person name="Rey D.A."/>
            <person name="Rueckert C."/>
            <person name="Rupp O."/>
            <person name="Sahm H."/>
            <person name="Wendisch V.F."/>
            <person name="Wiegraebe I."/>
            <person name="Tauch A."/>
        </authorList>
    </citation>
    <scope>NUCLEOTIDE SEQUENCE [LARGE SCALE GENOMIC DNA]</scope>
    <source>
        <strain>ATCC 13032 / DSM 20300 / JCM 1318 / BCRC 11384 / CCUG 27702 / LMG 3730 / NBRC 12168 / NCIMB 10025 / NRRL B-2784 / 534</strain>
    </source>
</reference>
<reference key="3">
    <citation type="journal article" date="2012" name="PLoS ONE">
        <title>Biochemical and molecular characterization of the gentisate transporter GenK in Corynebacterium glutamicum.</title>
        <authorList>
            <person name="Xu Y."/>
            <person name="Wang S.H."/>
            <person name="Chao H.J."/>
            <person name="Liu S.J."/>
            <person name="Zhou N.Y."/>
        </authorList>
    </citation>
    <scope>FUNCTION</scope>
    <scope>BIOPHYSICOCHEMICAL PROPERTIES</scope>
    <scope>DISRUPTION PHENOTYPE</scope>
    <scope>MUTAGENESIS OF ASP-54; ASP-57; ARG-103; TRP-309; ASP-312; ARG-313; ILE-317 AND ARG-386</scope>
    <source>
        <strain>ATCC 13032 / DSM 20300 / JCM 1318 / BCRC 11384 / CCUG 27702 / LMG 3730 / NBRC 12168 / NCIMB 10025 / NRRL B-2784 / 534</strain>
    </source>
</reference>
<organism>
    <name type="scientific">Corynebacterium glutamicum (strain ATCC 13032 / DSM 20300 / JCM 1318 / BCRC 11384 / CCUG 27702 / LMG 3730 / NBRC 12168 / NCIMB 10025 / NRRL B-2784 / 534)</name>
    <dbReference type="NCBI Taxonomy" id="196627"/>
    <lineage>
        <taxon>Bacteria</taxon>
        <taxon>Bacillati</taxon>
        <taxon>Actinomycetota</taxon>
        <taxon>Actinomycetes</taxon>
        <taxon>Mycobacteriales</taxon>
        <taxon>Corynebacteriaceae</taxon>
        <taxon>Corynebacterium</taxon>
    </lineage>
</organism>
<feature type="chain" id="PRO_0000428627" description="Gentisate transporter">
    <location>
        <begin position="1"/>
        <end position="444"/>
    </location>
</feature>
<feature type="transmembrane region" description="Helical" evidence="1">
    <location>
        <begin position="42"/>
        <end position="64"/>
    </location>
</feature>
<feature type="transmembrane region" description="Helical" evidence="1">
    <location>
        <begin position="79"/>
        <end position="101"/>
    </location>
</feature>
<feature type="transmembrane region" description="Helical" evidence="1">
    <location>
        <begin position="108"/>
        <end position="127"/>
    </location>
</feature>
<feature type="transmembrane region" description="Helical" evidence="1">
    <location>
        <begin position="131"/>
        <end position="153"/>
    </location>
</feature>
<feature type="transmembrane region" description="Helical" evidence="1">
    <location>
        <begin position="166"/>
        <end position="188"/>
    </location>
</feature>
<feature type="transmembrane region" description="Helical" evidence="1">
    <location>
        <begin position="198"/>
        <end position="220"/>
    </location>
</feature>
<feature type="transmembrane region" description="Helical" evidence="1">
    <location>
        <begin position="252"/>
        <end position="274"/>
    </location>
</feature>
<feature type="transmembrane region" description="Helical" evidence="1">
    <location>
        <begin position="289"/>
        <end position="311"/>
    </location>
</feature>
<feature type="transmembrane region" description="Helical" evidence="1">
    <location>
        <begin position="318"/>
        <end position="340"/>
    </location>
</feature>
<feature type="transmembrane region" description="Helical" evidence="1">
    <location>
        <begin position="344"/>
        <end position="366"/>
    </location>
</feature>
<feature type="transmembrane region" description="Helical" evidence="1">
    <location>
        <begin position="378"/>
        <end position="400"/>
    </location>
</feature>
<feature type="transmembrane region" description="Helical" evidence="1">
    <location>
        <begin position="410"/>
        <end position="428"/>
    </location>
</feature>
<feature type="mutagenesis site" description="Loss of transport activity." evidence="2">
    <original>D</original>
    <variation>A</variation>
    <location>
        <position position="54"/>
    </location>
</feature>
<feature type="mutagenesis site" description="Retains 50% of its transport activity." evidence="2">
    <original>D</original>
    <variation>E</variation>
    <location>
        <position position="54"/>
    </location>
</feature>
<feature type="mutagenesis site" description="Loss of transport activity." evidence="2">
    <original>D</original>
    <variation>A</variation>
    <location>
        <position position="57"/>
    </location>
</feature>
<feature type="mutagenesis site" description="Retains 50% of its transport activity." evidence="2">
    <original>D</original>
    <variation>E</variation>
    <location>
        <position position="57"/>
    </location>
</feature>
<feature type="mutagenesis site" description="Loss of transport activity." evidence="2">
    <original>R</original>
    <variation>A</variation>
    <location>
        <position position="103"/>
    </location>
</feature>
<feature type="mutagenesis site" description="Loss of transport activity." evidence="2">
    <original>W</original>
    <variation>V</variation>
    <location>
        <position position="309"/>
    </location>
</feature>
<feature type="mutagenesis site" description="Loss of transport activity." evidence="2">
    <original>D</original>
    <variation>A</variation>
    <location>
        <position position="312"/>
    </location>
</feature>
<feature type="mutagenesis site" description="Loss of transport activity." evidence="2">
    <original>R</original>
    <variation>A</variation>
    <location>
        <position position="313"/>
    </location>
</feature>
<feature type="mutagenesis site" description="Loss of transport activity." evidence="2">
    <original>I</original>
    <variation>H</variation>
    <variation>Y</variation>
    <location>
        <position position="317"/>
    </location>
</feature>
<feature type="mutagenesis site" description="Loss of transport activity." evidence="2">
    <original>R</original>
    <variation>A</variation>
    <location>
        <position position="386"/>
    </location>
</feature>
<gene>
    <name type="primary">genK</name>
    <name type="ordered locus">Cgl3025</name>
    <name type="ordered locus">cg3353</name>
</gene>
<dbReference type="EMBL" id="BA000036">
    <property type="protein sequence ID" value="BAC00419.1"/>
    <property type="status" value="ALT_INIT"/>
    <property type="molecule type" value="Genomic_DNA"/>
</dbReference>
<dbReference type="EMBL" id="BX927157">
    <property type="protein sequence ID" value="CAF18965.1"/>
    <property type="status" value="ALT_INIT"/>
    <property type="molecule type" value="Genomic_DNA"/>
</dbReference>
<dbReference type="RefSeq" id="NP_602219.1">
    <property type="nucleotide sequence ID" value="NC_003450.3"/>
</dbReference>
<dbReference type="RefSeq" id="WP_011015577.1">
    <property type="nucleotide sequence ID" value="NC_003450.3"/>
</dbReference>
<dbReference type="SMR" id="Q8NLB7"/>
<dbReference type="STRING" id="196627.cg3353"/>
<dbReference type="TCDB" id="2.A.1.15.10">
    <property type="family name" value="the major facilitator superfamily (mfs)"/>
</dbReference>
<dbReference type="GeneID" id="1020966"/>
<dbReference type="KEGG" id="cgb:cg3353"/>
<dbReference type="KEGG" id="cgl:Cgl3025"/>
<dbReference type="PATRIC" id="fig|196627.13.peg.2960"/>
<dbReference type="eggNOG" id="COG2814">
    <property type="taxonomic scope" value="Bacteria"/>
</dbReference>
<dbReference type="HOGENOM" id="CLU_001265_46_4_11"/>
<dbReference type="OrthoDB" id="9787026at2"/>
<dbReference type="BioCyc" id="CORYNE:G18NG-12646-MONOMER"/>
<dbReference type="BioCyc" id="MetaCyc:G18NG-12646-MONOMER"/>
<dbReference type="Proteomes" id="UP000000582">
    <property type="component" value="Chromosome"/>
</dbReference>
<dbReference type="Proteomes" id="UP000001009">
    <property type="component" value="Chromosome"/>
</dbReference>
<dbReference type="GO" id="GO:0005886">
    <property type="term" value="C:plasma membrane"/>
    <property type="evidence" value="ECO:0007669"/>
    <property type="project" value="UniProtKB-SubCell"/>
</dbReference>
<dbReference type="GO" id="GO:0046943">
    <property type="term" value="F:carboxylic acid transmembrane transporter activity"/>
    <property type="evidence" value="ECO:0007669"/>
    <property type="project" value="TreeGrafter"/>
</dbReference>
<dbReference type="GO" id="GO:0015293">
    <property type="term" value="F:symporter activity"/>
    <property type="evidence" value="ECO:0007669"/>
    <property type="project" value="UniProtKB-KW"/>
</dbReference>
<dbReference type="CDD" id="cd17365">
    <property type="entry name" value="MFS_PcaK_like"/>
    <property type="match status" value="1"/>
</dbReference>
<dbReference type="Gene3D" id="1.20.1250.20">
    <property type="entry name" value="MFS general substrate transporter like domains"/>
    <property type="match status" value="1"/>
</dbReference>
<dbReference type="InterPro" id="IPR011701">
    <property type="entry name" value="MFS"/>
</dbReference>
<dbReference type="InterPro" id="IPR020846">
    <property type="entry name" value="MFS_dom"/>
</dbReference>
<dbReference type="InterPro" id="IPR036259">
    <property type="entry name" value="MFS_trans_sf"/>
</dbReference>
<dbReference type="InterPro" id="IPR005829">
    <property type="entry name" value="Sugar_transporter_CS"/>
</dbReference>
<dbReference type="PANTHER" id="PTHR23508">
    <property type="entry name" value="CARBOXYLIC ACID TRANSPORTER PROTEIN HOMOLOG"/>
    <property type="match status" value="1"/>
</dbReference>
<dbReference type="PANTHER" id="PTHR23508:SF10">
    <property type="entry name" value="CARBOXYLIC ACID TRANSPORTER PROTEIN HOMOLOG"/>
    <property type="match status" value="1"/>
</dbReference>
<dbReference type="Pfam" id="PF07690">
    <property type="entry name" value="MFS_1"/>
    <property type="match status" value="2"/>
</dbReference>
<dbReference type="SUPFAM" id="SSF103473">
    <property type="entry name" value="MFS general substrate transporter"/>
    <property type="match status" value="1"/>
</dbReference>
<dbReference type="PROSITE" id="PS50850">
    <property type="entry name" value="MFS"/>
    <property type="match status" value="1"/>
</dbReference>